<comment type="subcellular location">
    <subcellularLocation>
        <location evidence="2">Membrane</location>
        <topology evidence="2">Single-pass membrane protein</topology>
    </subcellularLocation>
</comment>
<name>Y4LN_SINFN</name>
<keyword id="KW-0472">Membrane</keyword>
<keyword id="KW-0614">Plasmid</keyword>
<keyword id="KW-1185">Reference proteome</keyword>
<keyword id="KW-0812">Transmembrane</keyword>
<keyword id="KW-1133">Transmembrane helix</keyword>
<accession>P55554</accession>
<reference key="1">
    <citation type="journal article" date="1997" name="Nature">
        <title>Molecular basis of symbiosis between Rhizobium and legumes.</title>
        <authorList>
            <person name="Freiberg C.A."/>
            <person name="Fellay R."/>
            <person name="Bairoch A."/>
            <person name="Broughton W.J."/>
            <person name="Rosenthal A."/>
            <person name="Perret X."/>
        </authorList>
    </citation>
    <scope>NUCLEOTIDE SEQUENCE [LARGE SCALE GENOMIC DNA]</scope>
    <source>
        <strain>NBRC 101917 / NGR234</strain>
    </source>
</reference>
<reference key="2">
    <citation type="journal article" date="2009" name="Appl. Environ. Microbiol.">
        <title>Rhizobium sp. strain NGR234 possesses a remarkable number of secretion systems.</title>
        <authorList>
            <person name="Schmeisser C."/>
            <person name="Liesegang H."/>
            <person name="Krysciak D."/>
            <person name="Bakkou N."/>
            <person name="Le Quere A."/>
            <person name="Wollherr A."/>
            <person name="Heinemeyer I."/>
            <person name="Morgenstern B."/>
            <person name="Pommerening-Roeser A."/>
            <person name="Flores M."/>
            <person name="Palacios R."/>
            <person name="Brenner S."/>
            <person name="Gottschalk G."/>
            <person name="Schmitz R.A."/>
            <person name="Broughton W.J."/>
            <person name="Perret X."/>
            <person name="Strittmatter A.W."/>
            <person name="Streit W.R."/>
        </authorList>
    </citation>
    <scope>NUCLEOTIDE SEQUENCE [LARGE SCALE GENOMIC DNA]</scope>
    <source>
        <strain>NBRC 101917 / NGR234</strain>
    </source>
</reference>
<feature type="chain" id="PRO_0000200907" description="Uncharacterized protein y4lN">
    <location>
        <begin position="1"/>
        <end position="160"/>
    </location>
</feature>
<feature type="transmembrane region" description="Helical" evidence="1">
    <location>
        <begin position="47"/>
        <end position="67"/>
    </location>
</feature>
<evidence type="ECO:0000255" key="1"/>
<evidence type="ECO:0000305" key="2"/>
<proteinExistence type="predicted"/>
<protein>
    <recommendedName>
        <fullName>Uncharacterized protein y4lN</fullName>
    </recommendedName>
</protein>
<sequence length="160" mass="18050">MISEASSRPGFITAPADPVGEYPRASRRFESALLHIEVLSAMNIEKLLGGFANVAAILTPLVAVLAYSRFLWERRQKRLRLESYLREQKLFECTGQHSFLHLVATLGMFEADIMDASYRSKVISRNVAVDVAGEPVRIVLEYEPDDLEKELPKRPGRGQF</sequence>
<dbReference type="EMBL" id="U00090">
    <property type="protein sequence ID" value="AAB92458.1"/>
    <property type="molecule type" value="Genomic_DNA"/>
</dbReference>
<dbReference type="RefSeq" id="NP_443963.1">
    <property type="nucleotide sequence ID" value="NC_000914.2"/>
</dbReference>
<dbReference type="KEGG" id="rhi:NGR_a02620"/>
<dbReference type="eggNOG" id="ENOG50312HB">
    <property type="taxonomic scope" value="Bacteria"/>
</dbReference>
<dbReference type="HOGENOM" id="CLU_139781_0_0_5"/>
<dbReference type="OrthoDB" id="8421582at2"/>
<dbReference type="Proteomes" id="UP000001054">
    <property type="component" value="Plasmid pNGR234a"/>
</dbReference>
<dbReference type="GO" id="GO:0016020">
    <property type="term" value="C:membrane"/>
    <property type="evidence" value="ECO:0007669"/>
    <property type="project" value="UniProtKB-SubCell"/>
</dbReference>
<gene>
    <name type="ordered locus">NGR_a02620</name>
    <name type="ORF">y4lN</name>
</gene>
<geneLocation type="plasmid">
    <name>sym pNGR234a</name>
</geneLocation>
<organism>
    <name type="scientific">Sinorhizobium fredii (strain NBRC 101917 / NGR234)</name>
    <dbReference type="NCBI Taxonomy" id="394"/>
    <lineage>
        <taxon>Bacteria</taxon>
        <taxon>Pseudomonadati</taxon>
        <taxon>Pseudomonadota</taxon>
        <taxon>Alphaproteobacteria</taxon>
        <taxon>Hyphomicrobiales</taxon>
        <taxon>Rhizobiaceae</taxon>
        <taxon>Sinorhizobium/Ensifer group</taxon>
        <taxon>Sinorhizobium</taxon>
    </lineage>
</organism>